<proteinExistence type="inferred from homology"/>
<keyword id="KW-0067">ATP-binding</keyword>
<keyword id="KW-0963">Cytoplasm</keyword>
<keyword id="KW-0418">Kinase</keyword>
<keyword id="KW-0460">Magnesium</keyword>
<keyword id="KW-0479">Metal-binding</keyword>
<keyword id="KW-0547">Nucleotide-binding</keyword>
<keyword id="KW-0808">Transferase</keyword>
<accession>A7FW24</accession>
<protein>
    <recommendedName>
        <fullName evidence="1">Acetate kinase</fullName>
        <ecNumber evidence="1">2.7.2.1</ecNumber>
    </recommendedName>
    <alternativeName>
        <fullName evidence="1">Acetokinase</fullName>
    </alternativeName>
</protein>
<sequence length="397" mass="43430">MKILVVNCGSSSLKYQLIDMTSEEALAKGLVERIGIEGSILTQKVNGEKYIIEEPMKDHKKAIELVLKALVDKEHGVISDMSEIAAVGHRVVHGGEKYASSVLINDEVMKALEDCVKLAPLHNPPNIIGINACRELMPKTPMVAVFDTAFHQTLPDYAYMYPLPYELYEQNGIRKYGFHGTSHRYVSSVASEMMGKDLKDLKVITCHLGNGASLCAVKEGKSVETSMGFTPLAGLAMGTRCGDIDPAILLFMERELKMSPDEVDTVINKKSGVLGISGVSSDFRDIEGAAEEGNKRAKLALDVYHYTVRQTIGAYTAVLNGVDAIVFTAGLGENSAASREEILNGLEYLGIKIDAEKNKQRGKQIEISTEDSKVKVFVIPTDEELMIARDTKEITVK</sequence>
<dbReference type="EC" id="2.7.2.1" evidence="1"/>
<dbReference type="EMBL" id="CP000726">
    <property type="protein sequence ID" value="ABS32709.1"/>
    <property type="molecule type" value="Genomic_DNA"/>
</dbReference>
<dbReference type="RefSeq" id="WP_011986808.1">
    <property type="nucleotide sequence ID" value="NC_009697.1"/>
</dbReference>
<dbReference type="SMR" id="A7FW24"/>
<dbReference type="KEGG" id="cba:CLB_2324"/>
<dbReference type="HOGENOM" id="CLU_020352_0_1_9"/>
<dbReference type="UniPathway" id="UPA00340">
    <property type="reaction ID" value="UER00458"/>
</dbReference>
<dbReference type="GO" id="GO:0005737">
    <property type="term" value="C:cytoplasm"/>
    <property type="evidence" value="ECO:0007669"/>
    <property type="project" value="UniProtKB-SubCell"/>
</dbReference>
<dbReference type="GO" id="GO:0008776">
    <property type="term" value="F:acetate kinase activity"/>
    <property type="evidence" value="ECO:0007669"/>
    <property type="project" value="UniProtKB-UniRule"/>
</dbReference>
<dbReference type="GO" id="GO:0005524">
    <property type="term" value="F:ATP binding"/>
    <property type="evidence" value="ECO:0007669"/>
    <property type="project" value="UniProtKB-KW"/>
</dbReference>
<dbReference type="GO" id="GO:0000287">
    <property type="term" value="F:magnesium ion binding"/>
    <property type="evidence" value="ECO:0007669"/>
    <property type="project" value="UniProtKB-UniRule"/>
</dbReference>
<dbReference type="GO" id="GO:0006083">
    <property type="term" value="P:acetate metabolic process"/>
    <property type="evidence" value="ECO:0007669"/>
    <property type="project" value="TreeGrafter"/>
</dbReference>
<dbReference type="GO" id="GO:0006085">
    <property type="term" value="P:acetyl-CoA biosynthetic process"/>
    <property type="evidence" value="ECO:0007669"/>
    <property type="project" value="UniProtKB-UniRule"/>
</dbReference>
<dbReference type="CDD" id="cd24010">
    <property type="entry name" value="ASKHA_NBD_AcK_PK"/>
    <property type="match status" value="1"/>
</dbReference>
<dbReference type="Gene3D" id="3.30.420.40">
    <property type="match status" value="2"/>
</dbReference>
<dbReference type="HAMAP" id="MF_00020">
    <property type="entry name" value="Acetate_kinase"/>
    <property type="match status" value="1"/>
</dbReference>
<dbReference type="InterPro" id="IPR004372">
    <property type="entry name" value="Ac/propionate_kinase"/>
</dbReference>
<dbReference type="InterPro" id="IPR000890">
    <property type="entry name" value="Aliphatic_acid_kin_short-chain"/>
</dbReference>
<dbReference type="InterPro" id="IPR023865">
    <property type="entry name" value="Aliphatic_acid_kinase_CS"/>
</dbReference>
<dbReference type="InterPro" id="IPR043129">
    <property type="entry name" value="ATPase_NBD"/>
</dbReference>
<dbReference type="NCBIfam" id="TIGR00016">
    <property type="entry name" value="ackA"/>
    <property type="match status" value="1"/>
</dbReference>
<dbReference type="PANTHER" id="PTHR21060">
    <property type="entry name" value="ACETATE KINASE"/>
    <property type="match status" value="1"/>
</dbReference>
<dbReference type="PANTHER" id="PTHR21060:SF15">
    <property type="entry name" value="ACETATE KINASE-RELATED"/>
    <property type="match status" value="1"/>
</dbReference>
<dbReference type="Pfam" id="PF00871">
    <property type="entry name" value="Acetate_kinase"/>
    <property type="match status" value="1"/>
</dbReference>
<dbReference type="PIRSF" id="PIRSF000722">
    <property type="entry name" value="Acetate_prop_kin"/>
    <property type="match status" value="1"/>
</dbReference>
<dbReference type="PRINTS" id="PR00471">
    <property type="entry name" value="ACETATEKNASE"/>
</dbReference>
<dbReference type="SUPFAM" id="SSF53067">
    <property type="entry name" value="Actin-like ATPase domain"/>
    <property type="match status" value="2"/>
</dbReference>
<dbReference type="PROSITE" id="PS01075">
    <property type="entry name" value="ACETATE_KINASE_1"/>
    <property type="match status" value="1"/>
</dbReference>
<dbReference type="PROSITE" id="PS01076">
    <property type="entry name" value="ACETATE_KINASE_2"/>
    <property type="match status" value="1"/>
</dbReference>
<gene>
    <name evidence="1" type="primary">ackA</name>
    <name type="ordered locus">CLB_2324</name>
</gene>
<comment type="function">
    <text evidence="1">Catalyzes the formation of acetyl phosphate from acetate and ATP. Can also catalyze the reverse reaction.</text>
</comment>
<comment type="catalytic activity">
    <reaction evidence="1">
        <text>acetate + ATP = acetyl phosphate + ADP</text>
        <dbReference type="Rhea" id="RHEA:11352"/>
        <dbReference type="ChEBI" id="CHEBI:22191"/>
        <dbReference type="ChEBI" id="CHEBI:30089"/>
        <dbReference type="ChEBI" id="CHEBI:30616"/>
        <dbReference type="ChEBI" id="CHEBI:456216"/>
        <dbReference type="EC" id="2.7.2.1"/>
    </reaction>
</comment>
<comment type="cofactor">
    <cofactor evidence="1">
        <name>Mg(2+)</name>
        <dbReference type="ChEBI" id="CHEBI:18420"/>
    </cofactor>
    <cofactor evidence="1">
        <name>Mn(2+)</name>
        <dbReference type="ChEBI" id="CHEBI:29035"/>
    </cofactor>
    <text evidence="1">Mg(2+). Can also accept Mn(2+).</text>
</comment>
<comment type="pathway">
    <text evidence="1">Metabolic intermediate biosynthesis; acetyl-CoA biosynthesis; acetyl-CoA from acetate: step 1/2.</text>
</comment>
<comment type="subunit">
    <text evidence="1">Homodimer.</text>
</comment>
<comment type="subcellular location">
    <subcellularLocation>
        <location evidence="1">Cytoplasm</location>
    </subcellularLocation>
</comment>
<comment type="similarity">
    <text evidence="1">Belongs to the acetokinase family.</text>
</comment>
<name>ACKA_CLOB1</name>
<evidence type="ECO:0000255" key="1">
    <source>
        <dbReference type="HAMAP-Rule" id="MF_00020"/>
    </source>
</evidence>
<organism>
    <name type="scientific">Clostridium botulinum (strain ATCC 19397 / Type A)</name>
    <dbReference type="NCBI Taxonomy" id="441770"/>
    <lineage>
        <taxon>Bacteria</taxon>
        <taxon>Bacillati</taxon>
        <taxon>Bacillota</taxon>
        <taxon>Clostridia</taxon>
        <taxon>Eubacteriales</taxon>
        <taxon>Clostridiaceae</taxon>
        <taxon>Clostridium</taxon>
    </lineage>
</organism>
<reference key="1">
    <citation type="journal article" date="2007" name="PLoS ONE">
        <title>Analysis of the neurotoxin complex genes in Clostridium botulinum A1-A4 and B1 strains: BoNT/A3, /Ba4 and /B1 clusters are located within plasmids.</title>
        <authorList>
            <person name="Smith T.J."/>
            <person name="Hill K.K."/>
            <person name="Foley B.T."/>
            <person name="Detter J.C."/>
            <person name="Munk A.C."/>
            <person name="Bruce D.C."/>
            <person name="Doggett N.A."/>
            <person name="Smith L.A."/>
            <person name="Marks J.D."/>
            <person name="Xie G."/>
            <person name="Brettin T.S."/>
        </authorList>
    </citation>
    <scope>NUCLEOTIDE SEQUENCE [LARGE SCALE GENOMIC DNA]</scope>
    <source>
        <strain>ATCC 19397 / Type A</strain>
    </source>
</reference>
<feature type="chain" id="PRO_1000002220" description="Acetate kinase">
    <location>
        <begin position="1"/>
        <end position="397"/>
    </location>
</feature>
<feature type="active site" description="Proton donor/acceptor" evidence="1">
    <location>
        <position position="147"/>
    </location>
</feature>
<feature type="binding site" evidence="1">
    <location>
        <position position="7"/>
    </location>
    <ligand>
        <name>Mg(2+)</name>
        <dbReference type="ChEBI" id="CHEBI:18420"/>
    </ligand>
</feature>
<feature type="binding site" evidence="1">
    <location>
        <position position="14"/>
    </location>
    <ligand>
        <name>ATP</name>
        <dbReference type="ChEBI" id="CHEBI:30616"/>
    </ligand>
</feature>
<feature type="binding site" evidence="1">
    <location>
        <position position="90"/>
    </location>
    <ligand>
        <name>substrate</name>
    </ligand>
</feature>
<feature type="binding site" evidence="1">
    <location>
        <begin position="207"/>
        <end position="211"/>
    </location>
    <ligand>
        <name>ATP</name>
        <dbReference type="ChEBI" id="CHEBI:30616"/>
    </ligand>
</feature>
<feature type="binding site" evidence="1">
    <location>
        <begin position="282"/>
        <end position="284"/>
    </location>
    <ligand>
        <name>ATP</name>
        <dbReference type="ChEBI" id="CHEBI:30616"/>
    </ligand>
</feature>
<feature type="binding site" evidence="1">
    <location>
        <begin position="330"/>
        <end position="334"/>
    </location>
    <ligand>
        <name>ATP</name>
        <dbReference type="ChEBI" id="CHEBI:30616"/>
    </ligand>
</feature>
<feature type="binding site" evidence="1">
    <location>
        <position position="383"/>
    </location>
    <ligand>
        <name>Mg(2+)</name>
        <dbReference type="ChEBI" id="CHEBI:18420"/>
    </ligand>
</feature>
<feature type="site" description="Transition state stabilizer" evidence="1">
    <location>
        <position position="179"/>
    </location>
</feature>
<feature type="site" description="Transition state stabilizer" evidence="1">
    <location>
        <position position="240"/>
    </location>
</feature>